<name>LY96_BOVIN</name>
<keyword id="KW-1015">Disulfide bond</keyword>
<keyword id="KW-0325">Glycoprotein</keyword>
<keyword id="KW-0391">Immunity</keyword>
<keyword id="KW-0395">Inflammatory response</keyword>
<keyword id="KW-0399">Innate immunity</keyword>
<keyword id="KW-1185">Reference proteome</keyword>
<keyword id="KW-0964">Secreted</keyword>
<keyword id="KW-0732">Signal</keyword>
<sequence length="160" mass="18484">MFPFMLFSTLFSSIFTEPREKMWICNSSDASLWYNYCDDMKFPISVKVEPCVTIKGTKGKLHLYYIARRDIQKLYLNLHISIKSMTLPMRKEVICREYGGDYSFCGALKGETVNTTIPFSFQGIRFSPGQYHCVVEAISGNSEEMLFCLNFTIIHYSSLN</sequence>
<reference key="1">
    <citation type="submission" date="2001-04" db="EMBL/GenBank/DDBJ databases">
        <title>Role of bovine TLR2, TLR4 and CD14 in the recognition of bacterial constituents.</title>
        <authorList>
            <person name="Guionaud C.T."/>
            <person name="Dubey C."/>
            <person name="Zumkehr J.R."/>
            <person name="Sonstegard T.S."/>
            <person name="Jungi T.W."/>
        </authorList>
    </citation>
    <scope>NUCLEOTIDE SEQUENCE [MRNA]</scope>
    <source>
        <tissue>Lymph node</tissue>
    </source>
</reference>
<reference key="2">
    <citation type="journal article" date="2007" name="Vet. Immunol. Immunopathol.">
        <title>Stable transduction of bovine TLR4 and bovine MD-2 into LPS-nonresponsive cells and soluble CD14 promote the ability to respond to LPS.</title>
        <authorList>
            <person name="Sauter K.S."/>
            <person name="Brcic M."/>
            <person name="Franchini M."/>
            <person name="Jungi T.W."/>
        </authorList>
    </citation>
    <scope>FUNCTION</scope>
    <scope>SUBCELLULAR LOCATION</scope>
    <scope>SUBUNIT</scope>
</reference>
<evidence type="ECO:0000250" key="1">
    <source>
        <dbReference type="UniProtKB" id="Q9Y6Y9"/>
    </source>
</evidence>
<evidence type="ECO:0000255" key="2"/>
<evidence type="ECO:0000269" key="3">
    <source>
    </source>
</evidence>
<evidence type="ECO:0000303" key="4">
    <source>
    </source>
</evidence>
<evidence type="ECO:0000305" key="5">
    <source>
    </source>
</evidence>
<dbReference type="EMBL" id="AF368418">
    <property type="protein sequence ID" value="AAL16721.1"/>
    <property type="molecule type" value="mRNA"/>
</dbReference>
<dbReference type="SMR" id="P58754"/>
<dbReference type="FunCoup" id="P58754">
    <property type="interactions" value="104"/>
</dbReference>
<dbReference type="GlyCosmos" id="P58754">
    <property type="glycosylation" value="3 sites, No reported glycans"/>
</dbReference>
<dbReference type="GlyGen" id="P58754">
    <property type="glycosylation" value="3 sites"/>
</dbReference>
<dbReference type="InParanoid" id="P58754"/>
<dbReference type="OrthoDB" id="9907947at2759"/>
<dbReference type="Proteomes" id="UP000009136">
    <property type="component" value="Unplaced"/>
</dbReference>
<dbReference type="GO" id="GO:0005576">
    <property type="term" value="C:extracellular region"/>
    <property type="evidence" value="ECO:0007669"/>
    <property type="project" value="UniProtKB-SubCell"/>
</dbReference>
<dbReference type="GO" id="GO:0046696">
    <property type="term" value="C:lipopolysaccharide receptor complex"/>
    <property type="evidence" value="ECO:0000250"/>
    <property type="project" value="UniProtKB"/>
</dbReference>
<dbReference type="GO" id="GO:0005886">
    <property type="term" value="C:plasma membrane"/>
    <property type="evidence" value="ECO:0000250"/>
    <property type="project" value="UniProtKB"/>
</dbReference>
<dbReference type="GO" id="GO:0001530">
    <property type="term" value="F:lipopolysaccharide binding"/>
    <property type="evidence" value="ECO:0007669"/>
    <property type="project" value="InterPro"/>
</dbReference>
<dbReference type="GO" id="GO:0001875">
    <property type="term" value="F:lipopolysaccharide immune receptor activity"/>
    <property type="evidence" value="ECO:0000250"/>
    <property type="project" value="UniProtKB"/>
</dbReference>
<dbReference type="GO" id="GO:0035662">
    <property type="term" value="F:Toll-like receptor 4 binding"/>
    <property type="evidence" value="ECO:0007669"/>
    <property type="project" value="InterPro"/>
</dbReference>
<dbReference type="GO" id="GO:0071222">
    <property type="term" value="P:cellular response to lipopolysaccharide"/>
    <property type="evidence" value="ECO:0000250"/>
    <property type="project" value="UniProtKB"/>
</dbReference>
<dbReference type="GO" id="GO:0032497">
    <property type="term" value="P:detection of lipopolysaccharide"/>
    <property type="evidence" value="ECO:0000250"/>
    <property type="project" value="UniProtKB"/>
</dbReference>
<dbReference type="GO" id="GO:0006954">
    <property type="term" value="P:inflammatory response"/>
    <property type="evidence" value="ECO:0007669"/>
    <property type="project" value="UniProtKB-KW"/>
</dbReference>
<dbReference type="GO" id="GO:0045087">
    <property type="term" value="P:innate immune response"/>
    <property type="evidence" value="ECO:0007669"/>
    <property type="project" value="UniProtKB-KW"/>
</dbReference>
<dbReference type="GO" id="GO:0031663">
    <property type="term" value="P:lipopolysaccharide-mediated signaling pathway"/>
    <property type="evidence" value="ECO:0000250"/>
    <property type="project" value="UniProtKB"/>
</dbReference>
<dbReference type="GO" id="GO:0031666">
    <property type="term" value="P:positive regulation of lipopolysaccharide-mediated signaling pathway"/>
    <property type="evidence" value="ECO:0000318"/>
    <property type="project" value="GO_Central"/>
</dbReference>
<dbReference type="GO" id="GO:0032760">
    <property type="term" value="P:positive regulation of tumor necrosis factor production"/>
    <property type="evidence" value="ECO:0000250"/>
    <property type="project" value="UniProtKB"/>
</dbReference>
<dbReference type="GO" id="GO:0034142">
    <property type="term" value="P:toll-like receptor 4 signaling pathway"/>
    <property type="evidence" value="ECO:0000250"/>
    <property type="project" value="UniProtKB"/>
</dbReference>
<dbReference type="FunFam" id="2.60.40.770:FF:000003">
    <property type="entry name" value="Lymphocyte antigen 96"/>
    <property type="match status" value="1"/>
</dbReference>
<dbReference type="Gene3D" id="2.60.40.770">
    <property type="match status" value="1"/>
</dbReference>
<dbReference type="InterPro" id="IPR014756">
    <property type="entry name" value="Ig_E-set"/>
</dbReference>
<dbReference type="InterPro" id="IPR039217">
    <property type="entry name" value="LY96"/>
</dbReference>
<dbReference type="InterPro" id="IPR003172">
    <property type="entry name" value="ML_dom"/>
</dbReference>
<dbReference type="PANTHER" id="PTHR15218:SF1">
    <property type="entry name" value="LYMPHOCYTE ANTIGEN 96"/>
    <property type="match status" value="1"/>
</dbReference>
<dbReference type="PANTHER" id="PTHR15218">
    <property type="entry name" value="MD-1, MD-2 - RELATED"/>
    <property type="match status" value="1"/>
</dbReference>
<dbReference type="Pfam" id="PF02221">
    <property type="entry name" value="E1_DerP2_DerF2"/>
    <property type="match status" value="1"/>
</dbReference>
<dbReference type="SMART" id="SM00737">
    <property type="entry name" value="ML"/>
    <property type="match status" value="1"/>
</dbReference>
<dbReference type="SUPFAM" id="SSF81296">
    <property type="entry name" value="E set domains"/>
    <property type="match status" value="1"/>
</dbReference>
<feature type="signal peptide" evidence="2">
    <location>
        <begin position="1"/>
        <end position="16"/>
    </location>
</feature>
<feature type="chain" id="PRO_0000018617" description="Lymphocyte antigen 96">
    <location>
        <begin position="17"/>
        <end position="160"/>
    </location>
</feature>
<feature type="region of interest" description="Interaction with lipopolysaccharide" evidence="1">
    <location>
        <begin position="119"/>
        <end position="123"/>
    </location>
</feature>
<feature type="glycosylation site" description="N-linked (GlcNAc...) asparagine" evidence="2">
    <location>
        <position position="26"/>
    </location>
</feature>
<feature type="glycosylation site" description="N-linked (GlcNAc...) asparagine" evidence="2">
    <location>
        <position position="114"/>
    </location>
</feature>
<feature type="glycosylation site" description="N-linked (GlcNAc...) asparagine" evidence="2">
    <location>
        <position position="150"/>
    </location>
</feature>
<feature type="disulfide bond" evidence="1">
    <location>
        <begin position="25"/>
        <end position="51"/>
    </location>
</feature>
<feature type="disulfide bond" evidence="1">
    <location>
        <begin position="37"/>
        <end position="148"/>
    </location>
</feature>
<feature type="disulfide bond" evidence="1">
    <location>
        <begin position="95"/>
        <end position="105"/>
    </location>
</feature>
<proteinExistence type="evidence at protein level"/>
<protein>
    <recommendedName>
        <fullName>Lymphocyte antigen 96</fullName>
        <shortName>Ly-96</shortName>
    </recommendedName>
    <alternativeName>
        <fullName evidence="4">Protein MD-2</fullName>
    </alternativeName>
</protein>
<organism>
    <name type="scientific">Bos taurus</name>
    <name type="common">Bovine</name>
    <dbReference type="NCBI Taxonomy" id="9913"/>
    <lineage>
        <taxon>Eukaryota</taxon>
        <taxon>Metazoa</taxon>
        <taxon>Chordata</taxon>
        <taxon>Craniata</taxon>
        <taxon>Vertebrata</taxon>
        <taxon>Euteleostomi</taxon>
        <taxon>Mammalia</taxon>
        <taxon>Eutheria</taxon>
        <taxon>Laurasiatheria</taxon>
        <taxon>Artiodactyla</taxon>
        <taxon>Ruminantia</taxon>
        <taxon>Pecora</taxon>
        <taxon>Bovidae</taxon>
        <taxon>Bovinae</taxon>
        <taxon>Bos</taxon>
    </lineage>
</organism>
<accession>P58754</accession>
<comment type="function">
    <text evidence="1 3">Binds bacterial lipopolysaccharide (LPS). Cooperates with TLR4 in the innate immune response to bacterial lipopolysaccharide (LPS), and with TLR2 in the response to cell wall components from Gram-positive and Gram-negative bacteria (By similarity). Enhances TLR4-dependent activation of NF-kappa-B. Cells expressing both LY96 and TLR4, but not TLR4 alone, respond to LPS.</text>
</comment>
<comment type="subunit">
    <text evidence="1 3">Heterogeneous homomer formed from homodimers; disulfide-linked (By similarity). Belongs to the lipopolysaccharide (LPS) receptor, a multi-protein complex containing at least CD14, LY96 and TLR4 (PubMed:17559944). Binds to the extracellular domains of TLR2 and TLR4. Ligand binding induces interaction with TLR4 and oligomerization of the complex (By similarity).</text>
</comment>
<comment type="subcellular location">
    <subcellularLocation>
        <location evidence="3">Secreted</location>
        <location evidence="3">Extracellular space</location>
    </subcellularLocation>
    <subcellularLocation>
        <location evidence="1">Secreted</location>
    </subcellularLocation>
    <text evidence="5">Retained in the extracellular space at the cell surface by interaction with TLR4.</text>
</comment>
<comment type="PTM">
    <text evidence="1">N-glycosylated.</text>
</comment>
<gene>
    <name type="primary">LY96</name>
    <name type="synonym">MD2</name>
</gene>